<proteinExistence type="evidence at transcript level"/>
<keyword id="KW-1003">Cell membrane</keyword>
<keyword id="KW-0970">Cilium biogenesis/degradation</keyword>
<keyword id="KW-0297">G-protein coupled receptor</keyword>
<keyword id="KW-0325">Glycoprotein</keyword>
<keyword id="KW-0472">Membrane</keyword>
<keyword id="KW-0675">Receptor</keyword>
<keyword id="KW-1185">Reference proteome</keyword>
<keyword id="KW-0807">Transducer</keyword>
<keyword id="KW-0812">Transmembrane</keyword>
<keyword id="KW-1133">Transmembrane helix</keyword>
<accession>Q99680</accession>
<accession>A4D0R8</accession>
<accession>O14554</accession>
<sequence length="433" mass="49265">MCFSPILEINMQSESNITVRDDIDDINTNMYQPLSYPLSFQVSLTGFLMLEIVLGLGSNLTVLVLYCMKSNLINSVSNIITMNLHVLDVIICVGCIPLTIVILLLSLESNTALICCFHEACVSFASVSTAINVFAITLDRYDISVKPANRILTMGRAVMLMISIWIFSFFSFLIPFIEVNFFSLQSGNTWENKTLLCVSTNEYYTELGMYYHLLVQIPIFFFTVVVMLITYTKILQALNIRIGTRFSTGQKKKARKKKTISLTTQHEATDMSQSSGGRNVVFGVRTSVSVIIALRRAVKRHRERRERQKRVFRMSLLIISTFLLCWTPISVLNTTILCLGPSDLLVKLRLCFLVMAYGTTIFHPLLYAFTRQKFQKVLKSKMKKRVVSIVEADPLPNNAVIHNSWIDPKRNKKITFEDSEIREKCLVPQVVTD</sequence>
<gene>
    <name evidence="8" type="primary">GPR22</name>
</gene>
<protein>
    <recommendedName>
        <fullName>G-protein coupled receptor 22</fullName>
    </recommendedName>
</protein>
<comment type="function">
    <text evidence="1 5">Orphan G-protein coupled receptor. Seems to act through a G(i)/G(o) mediated pathway (PubMed:18539757). May be involved in ciliogenesis (By similarity).</text>
</comment>
<comment type="subcellular location">
    <subcellularLocation>
        <location evidence="2">Cell membrane</location>
        <topology evidence="3">Multi-pass membrane protein</topology>
    </subcellularLocation>
</comment>
<comment type="tissue specificity">
    <text evidence="5 6">High expression in adult and fetal heart tissue (PubMed:18539757). Expressed in the brain, with enrichment in the accumbens, amygdala, cerebellum, cortex, and hippocampus regions (PubMed:18539757, PubMed:9073069).</text>
</comment>
<comment type="similarity">
    <text evidence="4">Belongs to the G-protein coupled receptor 1 family.</text>
</comment>
<reference key="1">
    <citation type="journal article" date="1997" name="Gene">
        <title>Cloning and chromosomal mapping of four putative novel human G-protein-coupled receptor genes.</title>
        <authorList>
            <person name="O'Dowd B.F."/>
            <person name="Nguyen T."/>
            <person name="Jung B.P."/>
            <person name="Marchese A."/>
            <person name="Cheng R."/>
            <person name="Heng H.H.Q."/>
            <person name="Kolakowski L.F. Jr."/>
            <person name="Lynch K.R."/>
            <person name="George S.R."/>
        </authorList>
    </citation>
    <scope>NUCLEOTIDE SEQUENCE [GENOMIC DNA]</scope>
    <scope>TISSUE SPECIFICITY</scope>
</reference>
<reference key="2">
    <citation type="journal article" date="2003" name="Nature">
        <title>The DNA sequence of human chromosome 7.</title>
        <authorList>
            <person name="Hillier L.W."/>
            <person name="Fulton R.S."/>
            <person name="Fulton L.A."/>
            <person name="Graves T.A."/>
            <person name="Pepin K.H."/>
            <person name="Wagner-McPherson C."/>
            <person name="Layman D."/>
            <person name="Maas J."/>
            <person name="Jaeger S."/>
            <person name="Walker R."/>
            <person name="Wylie K."/>
            <person name="Sekhon M."/>
            <person name="Becker M.C."/>
            <person name="O'Laughlin M.D."/>
            <person name="Schaller M.E."/>
            <person name="Fewell G.A."/>
            <person name="Delehaunty K.D."/>
            <person name="Miner T.L."/>
            <person name="Nash W.E."/>
            <person name="Cordes M."/>
            <person name="Du H."/>
            <person name="Sun H."/>
            <person name="Edwards J."/>
            <person name="Bradshaw-Cordum H."/>
            <person name="Ali J."/>
            <person name="Andrews S."/>
            <person name="Isak A."/>
            <person name="Vanbrunt A."/>
            <person name="Nguyen C."/>
            <person name="Du F."/>
            <person name="Lamar B."/>
            <person name="Courtney L."/>
            <person name="Kalicki J."/>
            <person name="Ozersky P."/>
            <person name="Bielicki L."/>
            <person name="Scott K."/>
            <person name="Holmes A."/>
            <person name="Harkins R."/>
            <person name="Harris A."/>
            <person name="Strong C.M."/>
            <person name="Hou S."/>
            <person name="Tomlinson C."/>
            <person name="Dauphin-Kohlberg S."/>
            <person name="Kozlowicz-Reilly A."/>
            <person name="Leonard S."/>
            <person name="Rohlfing T."/>
            <person name="Rock S.M."/>
            <person name="Tin-Wollam A.-M."/>
            <person name="Abbott A."/>
            <person name="Minx P."/>
            <person name="Maupin R."/>
            <person name="Strowmatt C."/>
            <person name="Latreille P."/>
            <person name="Miller N."/>
            <person name="Johnson D."/>
            <person name="Murray J."/>
            <person name="Woessner J.P."/>
            <person name="Wendl M.C."/>
            <person name="Yang S.-P."/>
            <person name="Schultz B.R."/>
            <person name="Wallis J.W."/>
            <person name="Spieth J."/>
            <person name="Bieri T.A."/>
            <person name="Nelson J.O."/>
            <person name="Berkowicz N."/>
            <person name="Wohldmann P.E."/>
            <person name="Cook L.L."/>
            <person name="Hickenbotham M.T."/>
            <person name="Eldred J."/>
            <person name="Williams D."/>
            <person name="Bedell J.A."/>
            <person name="Mardis E.R."/>
            <person name="Clifton S.W."/>
            <person name="Chissoe S.L."/>
            <person name="Marra M.A."/>
            <person name="Raymond C."/>
            <person name="Haugen E."/>
            <person name="Gillett W."/>
            <person name="Zhou Y."/>
            <person name="James R."/>
            <person name="Phelps K."/>
            <person name="Iadanoto S."/>
            <person name="Bubb K."/>
            <person name="Simms E."/>
            <person name="Levy R."/>
            <person name="Clendenning J."/>
            <person name="Kaul R."/>
            <person name="Kent W.J."/>
            <person name="Furey T.S."/>
            <person name="Baertsch R.A."/>
            <person name="Brent M.R."/>
            <person name="Keibler E."/>
            <person name="Flicek P."/>
            <person name="Bork P."/>
            <person name="Suyama M."/>
            <person name="Bailey J.A."/>
            <person name="Portnoy M.E."/>
            <person name="Torrents D."/>
            <person name="Chinwalla A.T."/>
            <person name="Gish W.R."/>
            <person name="Eddy S.R."/>
            <person name="McPherson J.D."/>
            <person name="Olson M.V."/>
            <person name="Eichler E.E."/>
            <person name="Green E.D."/>
            <person name="Waterston R.H."/>
            <person name="Wilson R.K."/>
        </authorList>
    </citation>
    <scope>NUCLEOTIDE SEQUENCE [LARGE SCALE GENOMIC DNA]</scope>
</reference>
<reference key="3">
    <citation type="submission" date="2005-07" db="EMBL/GenBank/DDBJ databases">
        <authorList>
            <person name="Mural R.J."/>
            <person name="Istrail S."/>
            <person name="Sutton G.G."/>
            <person name="Florea L."/>
            <person name="Halpern A.L."/>
            <person name="Mobarry C.M."/>
            <person name="Lippert R."/>
            <person name="Walenz B."/>
            <person name="Shatkay H."/>
            <person name="Dew I."/>
            <person name="Miller J.R."/>
            <person name="Flanigan M.J."/>
            <person name="Edwards N.J."/>
            <person name="Bolanos R."/>
            <person name="Fasulo D."/>
            <person name="Halldorsson B.V."/>
            <person name="Hannenhalli S."/>
            <person name="Turner R."/>
            <person name="Yooseph S."/>
            <person name="Lu F."/>
            <person name="Nusskern D.R."/>
            <person name="Shue B.C."/>
            <person name="Zheng X.H."/>
            <person name="Zhong F."/>
            <person name="Delcher A.L."/>
            <person name="Huson D.H."/>
            <person name="Kravitz S.A."/>
            <person name="Mouchard L."/>
            <person name="Reinert K."/>
            <person name="Remington K.A."/>
            <person name="Clark A.G."/>
            <person name="Waterman M.S."/>
            <person name="Eichler E.E."/>
            <person name="Adams M.D."/>
            <person name="Hunkapiller M.W."/>
            <person name="Myers E.W."/>
            <person name="Venter J.C."/>
        </authorList>
    </citation>
    <scope>NUCLEOTIDE SEQUENCE [LARGE SCALE GENOMIC DNA]</scope>
</reference>
<reference key="4">
    <citation type="submission" date="2011-01" db="EMBL/GenBank/DDBJ databases">
        <title>Isolation of cDNA coding for three human genes.</title>
        <authorList>
            <person name="Sutterer S.M."/>
            <person name="Kaighin V.A."/>
            <person name="Martin A.L."/>
            <person name="Aronstam R.S."/>
        </authorList>
    </citation>
    <scope>NUCLEOTIDE SEQUENCE [MRNA]</scope>
    <source>
        <tissue>Brain</tissue>
    </source>
</reference>
<reference key="5">
    <citation type="journal article" date="2003" name="Science">
        <title>Human chromosome 7: DNA sequence and biology.</title>
        <authorList>
            <person name="Scherer S.W."/>
            <person name="Cheung J."/>
            <person name="MacDonald J.R."/>
            <person name="Osborne L.R."/>
            <person name="Nakabayashi K."/>
            <person name="Herbrick J.-A."/>
            <person name="Carson A.R."/>
            <person name="Parker-Katiraee L."/>
            <person name="Skaug J."/>
            <person name="Khaja R."/>
            <person name="Zhang J."/>
            <person name="Hudek A.K."/>
            <person name="Li M."/>
            <person name="Haddad M."/>
            <person name="Duggan G.E."/>
            <person name="Fernandez B.A."/>
            <person name="Kanematsu E."/>
            <person name="Gentles S."/>
            <person name="Christopoulos C.C."/>
            <person name="Choufani S."/>
            <person name="Kwasnicka D."/>
            <person name="Zheng X.H."/>
            <person name="Lai Z."/>
            <person name="Nusskern D.R."/>
            <person name="Zhang Q."/>
            <person name="Gu Z."/>
            <person name="Lu F."/>
            <person name="Zeesman S."/>
            <person name="Nowaczyk M.J."/>
            <person name="Teshima I."/>
            <person name="Chitayat D."/>
            <person name="Shuman C."/>
            <person name="Weksberg R."/>
            <person name="Zackai E.H."/>
            <person name="Grebe T.A."/>
            <person name="Cox S.R."/>
            <person name="Kirkpatrick S.J."/>
            <person name="Rahman N."/>
            <person name="Friedman J.M."/>
            <person name="Heng H.H.Q."/>
            <person name="Pelicci P.G."/>
            <person name="Lo-Coco F."/>
            <person name="Belloni E."/>
            <person name="Shaffer L.G."/>
            <person name="Pober B."/>
            <person name="Morton C.C."/>
            <person name="Gusella J.F."/>
            <person name="Bruns G.A.P."/>
            <person name="Korf B.R."/>
            <person name="Quade B.J."/>
            <person name="Ligon A.H."/>
            <person name="Ferguson H."/>
            <person name="Higgins A.W."/>
            <person name="Leach N.T."/>
            <person name="Herrick S.R."/>
            <person name="Lemyre E."/>
            <person name="Farra C.G."/>
            <person name="Kim H.-G."/>
            <person name="Summers A.M."/>
            <person name="Gripp K.W."/>
            <person name="Roberts W."/>
            <person name="Szatmari P."/>
            <person name="Winsor E.J.T."/>
            <person name="Grzeschik K.-H."/>
            <person name="Teebi A."/>
            <person name="Minassian B.A."/>
            <person name="Kere J."/>
            <person name="Armengol L."/>
            <person name="Pujana M.A."/>
            <person name="Estivill X."/>
            <person name="Wilson M.D."/>
            <person name="Koop B.F."/>
            <person name="Tosi S."/>
            <person name="Moore G.E."/>
            <person name="Boright A.P."/>
            <person name="Zlotorynski E."/>
            <person name="Kerem B."/>
            <person name="Kroisel P.M."/>
            <person name="Petek E."/>
            <person name="Oscier D.G."/>
            <person name="Mould S.J."/>
            <person name="Doehner H."/>
            <person name="Doehner K."/>
            <person name="Rommens J.M."/>
            <person name="Vincent J.B."/>
            <person name="Venter J.C."/>
            <person name="Li P.W."/>
            <person name="Mural R.J."/>
            <person name="Adams M.D."/>
            <person name="Tsui L.-C."/>
        </authorList>
    </citation>
    <scope>NUCLEOTIDE SEQUENCE [LARGE SCALE GENOMIC DNA]</scope>
</reference>
<reference key="6">
    <citation type="journal article" date="2008" name="Am. J. Physiol.">
        <title>Myocardial expression, signaling, and function of GPR22: a protective role for an orphan G protein-coupled receptor.</title>
        <authorList>
            <person name="Adams J.W."/>
            <person name="Wang J."/>
            <person name="Davis J.R."/>
            <person name="Liaw C."/>
            <person name="Gaidarov I."/>
            <person name="Gatlin J."/>
            <person name="Dalton N.D."/>
            <person name="Gu Y."/>
            <person name="Ross J. Jr."/>
            <person name="Behan D."/>
            <person name="Chien K."/>
            <person name="Connolly D."/>
        </authorList>
    </citation>
    <scope>TISSUE SPECIFICITY</scope>
    <scope>FUNCTION</scope>
</reference>
<name>GPR22_HUMAN</name>
<evidence type="ECO:0000250" key="1">
    <source>
        <dbReference type="UniProtKB" id="A0A2R9YJI3"/>
    </source>
</evidence>
<evidence type="ECO:0000250" key="2">
    <source>
        <dbReference type="UniProtKB" id="D4A3U0"/>
    </source>
</evidence>
<evidence type="ECO:0000255" key="3"/>
<evidence type="ECO:0000255" key="4">
    <source>
        <dbReference type="PROSITE-ProRule" id="PRU00521"/>
    </source>
</evidence>
<evidence type="ECO:0000269" key="5">
    <source>
    </source>
</evidence>
<evidence type="ECO:0000269" key="6">
    <source>
    </source>
</evidence>
<evidence type="ECO:0000305" key="7"/>
<evidence type="ECO:0000312" key="8">
    <source>
        <dbReference type="HGNC" id="HGNC:4477"/>
    </source>
</evidence>
<dbReference type="EMBL" id="U66581">
    <property type="protein sequence ID" value="AAC51304.1"/>
    <property type="molecule type" value="Genomic_DNA"/>
</dbReference>
<dbReference type="EMBL" id="HQ995527">
    <property type="protein sequence ID" value="ADZ31972.1"/>
    <property type="molecule type" value="mRNA"/>
</dbReference>
<dbReference type="EMBL" id="AC002381">
    <property type="protein sequence ID" value="AAB63815.1"/>
    <property type="molecule type" value="Genomic_DNA"/>
</dbReference>
<dbReference type="EMBL" id="CH236947">
    <property type="protein sequence ID" value="EAL24394.1"/>
    <property type="molecule type" value="Genomic_DNA"/>
</dbReference>
<dbReference type="EMBL" id="CH471070">
    <property type="protein sequence ID" value="EAW83398.1"/>
    <property type="molecule type" value="Genomic_DNA"/>
</dbReference>
<dbReference type="CCDS" id="CCDS5744.1"/>
<dbReference type="RefSeq" id="NP_005286.2">
    <property type="nucleotide sequence ID" value="NM_005295.3"/>
</dbReference>
<dbReference type="RefSeq" id="XP_011514358.1">
    <property type="nucleotide sequence ID" value="XM_011516056.4"/>
</dbReference>
<dbReference type="RefSeq" id="XP_047276170.1">
    <property type="nucleotide sequence ID" value="XM_047420214.1"/>
</dbReference>
<dbReference type="RefSeq" id="XP_054188108.1">
    <property type="nucleotide sequence ID" value="XM_054332133.1"/>
</dbReference>
<dbReference type="RefSeq" id="XP_054213901.1">
    <property type="nucleotide sequence ID" value="XM_054357926.1"/>
</dbReference>
<dbReference type="RefSeq" id="XP_054213902.1">
    <property type="nucleotide sequence ID" value="XM_054357927.1"/>
</dbReference>
<dbReference type="SMR" id="Q99680"/>
<dbReference type="BioGRID" id="109104">
    <property type="interactions" value="3"/>
</dbReference>
<dbReference type="FunCoup" id="Q99680">
    <property type="interactions" value="536"/>
</dbReference>
<dbReference type="IntAct" id="Q99680">
    <property type="interactions" value="4"/>
</dbReference>
<dbReference type="MINT" id="Q99680"/>
<dbReference type="STRING" id="9606.ENSP00000302676"/>
<dbReference type="ChEMBL" id="CHEMBL4523914"/>
<dbReference type="GlyCosmos" id="Q99680">
    <property type="glycosylation" value="2 sites, No reported glycans"/>
</dbReference>
<dbReference type="GlyGen" id="Q99680">
    <property type="glycosylation" value="2 sites"/>
</dbReference>
<dbReference type="iPTMnet" id="Q99680"/>
<dbReference type="PhosphoSitePlus" id="Q99680"/>
<dbReference type="BioMuta" id="GPR22"/>
<dbReference type="DMDM" id="116242502"/>
<dbReference type="MassIVE" id="Q99680"/>
<dbReference type="PaxDb" id="9606-ENSP00000302676"/>
<dbReference type="PeptideAtlas" id="Q99680"/>
<dbReference type="ProteomicsDB" id="78394"/>
<dbReference type="Antibodypedia" id="1939">
    <property type="antibodies" value="282 antibodies from 29 providers"/>
</dbReference>
<dbReference type="DNASU" id="2845"/>
<dbReference type="Ensembl" id="ENST00000304402.6">
    <property type="protein sequence ID" value="ENSP00000302676.4"/>
    <property type="gene ID" value="ENSG00000172209.6"/>
</dbReference>
<dbReference type="Ensembl" id="ENST00000639742.2">
    <property type="protein sequence ID" value="ENSP00000492841.1"/>
    <property type="gene ID" value="ENSG00000283812.2"/>
</dbReference>
<dbReference type="GeneID" id="2845"/>
<dbReference type="KEGG" id="hsa:2845"/>
<dbReference type="MANE-Select" id="ENST00000304402.6">
    <property type="protein sequence ID" value="ENSP00000302676.4"/>
    <property type="RefSeq nucleotide sequence ID" value="NM_005295.3"/>
    <property type="RefSeq protein sequence ID" value="NP_005286.2"/>
</dbReference>
<dbReference type="UCSC" id="uc003vef.4">
    <property type="organism name" value="human"/>
</dbReference>
<dbReference type="AGR" id="HGNC:4477"/>
<dbReference type="CTD" id="2845"/>
<dbReference type="DisGeNET" id="2845"/>
<dbReference type="GeneCards" id="GPR22"/>
<dbReference type="HGNC" id="HGNC:4477">
    <property type="gene designation" value="GPR22"/>
</dbReference>
<dbReference type="HPA" id="ENSG00000172209">
    <property type="expression patterns" value="Tissue enhanced (brain, heart muscle)"/>
</dbReference>
<dbReference type="MIM" id="601910">
    <property type="type" value="gene"/>
</dbReference>
<dbReference type="neXtProt" id="NX_Q99680"/>
<dbReference type="OpenTargets" id="ENSG00000172209"/>
<dbReference type="PharmGKB" id="PA28865"/>
<dbReference type="VEuPathDB" id="HostDB:ENSG00000172209"/>
<dbReference type="eggNOG" id="KOG3656">
    <property type="taxonomic scope" value="Eukaryota"/>
</dbReference>
<dbReference type="GeneTree" id="ENSGT01130000278263"/>
<dbReference type="HOGENOM" id="CLU_057984_0_0_1"/>
<dbReference type="InParanoid" id="Q99680"/>
<dbReference type="OMA" id="VGPSDLM"/>
<dbReference type="OrthoDB" id="6156007at2759"/>
<dbReference type="PAN-GO" id="Q99680">
    <property type="GO annotations" value="4 GO annotations based on evolutionary models"/>
</dbReference>
<dbReference type="PhylomeDB" id="Q99680"/>
<dbReference type="TreeFam" id="TF318505"/>
<dbReference type="PathwayCommons" id="Q99680"/>
<dbReference type="SignaLink" id="Q99680"/>
<dbReference type="BioGRID-ORCS" id="2845">
    <property type="hits" value="14 hits in 1132 CRISPR screens"/>
</dbReference>
<dbReference type="GeneWiki" id="GPR22"/>
<dbReference type="GenomeRNAi" id="2845"/>
<dbReference type="Pharos" id="Q99680">
    <property type="development level" value="Tbio"/>
</dbReference>
<dbReference type="PRO" id="PR:Q99680"/>
<dbReference type="Proteomes" id="UP000005640">
    <property type="component" value="Chromosome 7"/>
</dbReference>
<dbReference type="RNAct" id="Q99680">
    <property type="molecule type" value="protein"/>
</dbReference>
<dbReference type="Bgee" id="ENSG00000172209">
    <property type="expression patterns" value="Expressed in cortical plate and 87 other cell types or tissues"/>
</dbReference>
<dbReference type="GO" id="GO:0005886">
    <property type="term" value="C:plasma membrane"/>
    <property type="evidence" value="ECO:0000250"/>
    <property type="project" value="UniProtKB"/>
</dbReference>
<dbReference type="GO" id="GO:0004930">
    <property type="term" value="F:G protein-coupled receptor activity"/>
    <property type="evidence" value="ECO:0000315"/>
    <property type="project" value="UniProtKB"/>
</dbReference>
<dbReference type="GO" id="GO:0030030">
    <property type="term" value="P:cell projection organization"/>
    <property type="evidence" value="ECO:0007669"/>
    <property type="project" value="UniProtKB-KW"/>
</dbReference>
<dbReference type="GO" id="GO:0032870">
    <property type="term" value="P:cellular response to hormone stimulus"/>
    <property type="evidence" value="ECO:0000318"/>
    <property type="project" value="GO_Central"/>
</dbReference>
<dbReference type="GO" id="GO:0007186">
    <property type="term" value="P:G protein-coupled receptor signaling pathway"/>
    <property type="evidence" value="ECO:0000318"/>
    <property type="project" value="GO_Central"/>
</dbReference>
<dbReference type="CDD" id="cd00637">
    <property type="entry name" value="7tm_classA_rhodopsin-like"/>
    <property type="match status" value="1"/>
</dbReference>
<dbReference type="FunFam" id="1.20.1070.10:FF:000084">
    <property type="entry name" value="Probable G-protein coupled receptor 22"/>
    <property type="match status" value="1"/>
</dbReference>
<dbReference type="FunFam" id="1.20.1070.10:FF:000116">
    <property type="entry name" value="probable G-protein coupled receptor 22"/>
    <property type="match status" value="1"/>
</dbReference>
<dbReference type="Gene3D" id="1.20.1070.10">
    <property type="entry name" value="Rhodopsin 7-helix transmembrane proteins"/>
    <property type="match status" value="2"/>
</dbReference>
<dbReference type="InterPro" id="IPR000276">
    <property type="entry name" value="GPCR_Rhodpsn"/>
</dbReference>
<dbReference type="InterPro" id="IPR017452">
    <property type="entry name" value="GPCR_Rhodpsn_7TM"/>
</dbReference>
<dbReference type="PANTHER" id="PTHR24241:SF1">
    <property type="entry name" value="G-PROTEIN COUPLED RECEPTOR 22"/>
    <property type="match status" value="1"/>
</dbReference>
<dbReference type="PANTHER" id="PTHR24241">
    <property type="entry name" value="NEUROPEPTIDE RECEPTOR-RELATED G-PROTEIN COUPLED RECEPTOR"/>
    <property type="match status" value="1"/>
</dbReference>
<dbReference type="Pfam" id="PF00001">
    <property type="entry name" value="7tm_1"/>
    <property type="match status" value="1"/>
</dbReference>
<dbReference type="PRINTS" id="PR00237">
    <property type="entry name" value="GPCRRHODOPSN"/>
</dbReference>
<dbReference type="SUPFAM" id="SSF81321">
    <property type="entry name" value="Family A G protein-coupled receptor-like"/>
    <property type="match status" value="2"/>
</dbReference>
<dbReference type="PROSITE" id="PS50262">
    <property type="entry name" value="G_PROTEIN_RECEP_F1_2"/>
    <property type="match status" value="1"/>
</dbReference>
<organism>
    <name type="scientific">Homo sapiens</name>
    <name type="common">Human</name>
    <dbReference type="NCBI Taxonomy" id="9606"/>
    <lineage>
        <taxon>Eukaryota</taxon>
        <taxon>Metazoa</taxon>
        <taxon>Chordata</taxon>
        <taxon>Craniata</taxon>
        <taxon>Vertebrata</taxon>
        <taxon>Euteleostomi</taxon>
        <taxon>Mammalia</taxon>
        <taxon>Eutheria</taxon>
        <taxon>Euarchontoglires</taxon>
        <taxon>Primates</taxon>
        <taxon>Haplorrhini</taxon>
        <taxon>Catarrhini</taxon>
        <taxon>Hominidae</taxon>
        <taxon>Homo</taxon>
    </lineage>
</organism>
<feature type="chain" id="PRO_0000069543" description="G-protein coupled receptor 22">
    <location>
        <begin position="1"/>
        <end position="433"/>
    </location>
</feature>
<feature type="topological domain" description="Extracellular" evidence="7">
    <location>
        <begin position="1"/>
        <end position="45"/>
    </location>
</feature>
<feature type="transmembrane region" description="Helical; Name=1" evidence="3">
    <location>
        <begin position="46"/>
        <end position="66"/>
    </location>
</feature>
<feature type="topological domain" description="Cytoplasmic" evidence="7">
    <location>
        <begin position="67"/>
        <end position="85"/>
    </location>
</feature>
<feature type="transmembrane region" description="Helical; Name=2" evidence="3">
    <location>
        <begin position="86"/>
        <end position="106"/>
    </location>
</feature>
<feature type="topological domain" description="Extracellular" evidence="7">
    <location>
        <begin position="107"/>
        <end position="115"/>
    </location>
</feature>
<feature type="transmembrane region" description="Helical; Name=3" evidence="3">
    <location>
        <begin position="116"/>
        <end position="136"/>
    </location>
</feature>
<feature type="topological domain" description="Cytoplasmic" evidence="7">
    <location>
        <begin position="137"/>
        <end position="156"/>
    </location>
</feature>
<feature type="transmembrane region" description="Helical; Name=4" evidence="3">
    <location>
        <begin position="157"/>
        <end position="177"/>
    </location>
</feature>
<feature type="topological domain" description="Extracellular" evidence="7">
    <location>
        <begin position="178"/>
        <end position="208"/>
    </location>
</feature>
<feature type="transmembrane region" description="Helical; Name=5" evidence="3">
    <location>
        <begin position="209"/>
        <end position="229"/>
    </location>
</feature>
<feature type="topological domain" description="Cytoplasmic" evidence="7">
    <location>
        <begin position="230"/>
        <end position="315"/>
    </location>
</feature>
<feature type="transmembrane region" description="Helical; Name=6" evidence="3">
    <location>
        <begin position="316"/>
        <end position="336"/>
    </location>
</feature>
<feature type="topological domain" description="Extracellular" evidence="7">
    <location>
        <begin position="337"/>
        <end position="349"/>
    </location>
</feature>
<feature type="transmembrane region" description="Helical; Name=7" evidence="3">
    <location>
        <begin position="350"/>
        <end position="370"/>
    </location>
</feature>
<feature type="topological domain" description="Cytoplasmic" evidence="7">
    <location>
        <begin position="371"/>
        <end position="433"/>
    </location>
</feature>
<feature type="glycosylation site" description="N-linked (GlcNAc...) asparagine" evidence="3">
    <location>
        <position position="16"/>
    </location>
</feature>
<feature type="glycosylation site" description="N-linked (GlcNAc...) asparagine" evidence="3">
    <location>
        <position position="192"/>
    </location>
</feature>
<feature type="sequence conflict" description="In Ref. 1; AAC51304." evidence="7" ref="1">
    <original>C</original>
    <variation>R</variation>
    <location>
        <position position="425"/>
    </location>
</feature>